<keyword id="KW-0007">Acetylation</keyword>
<keyword id="KW-0175">Coiled coil</keyword>
<keyword id="KW-0395">Inflammatory response</keyword>
<keyword id="KW-0539">Nucleus</keyword>
<keyword id="KW-0597">Phosphoprotein</keyword>
<keyword id="KW-1185">Reference proteome</keyword>
<keyword id="KW-0879">Wnt signaling pathway</keyword>
<organism>
    <name type="scientific">Rattus norvegicus</name>
    <name type="common">Rat</name>
    <dbReference type="NCBI Taxonomy" id="10116"/>
    <lineage>
        <taxon>Eukaryota</taxon>
        <taxon>Metazoa</taxon>
        <taxon>Chordata</taxon>
        <taxon>Craniata</taxon>
        <taxon>Vertebrata</taxon>
        <taxon>Euteleostomi</taxon>
        <taxon>Mammalia</taxon>
        <taxon>Eutheria</taxon>
        <taxon>Euarchontoglires</taxon>
        <taxon>Glires</taxon>
        <taxon>Rodentia</taxon>
        <taxon>Myomorpha</taxon>
        <taxon>Muroidea</taxon>
        <taxon>Muridae</taxon>
        <taxon>Murinae</taxon>
        <taxon>Rattus</taxon>
    </lineage>
</organism>
<name>SBNO1_RAT</name>
<gene>
    <name type="primary">Sbno1</name>
</gene>
<evidence type="ECO:0000250" key="1">
    <source>
        <dbReference type="UniProtKB" id="A3KN83"/>
    </source>
</evidence>
<evidence type="ECO:0000250" key="2">
    <source>
        <dbReference type="UniProtKB" id="Q689Z5"/>
    </source>
</evidence>
<evidence type="ECO:0000255" key="3"/>
<evidence type="ECO:0000256" key="4">
    <source>
        <dbReference type="SAM" id="MobiDB-lite"/>
    </source>
</evidence>
<evidence type="ECO:0000305" key="5"/>
<evidence type="ECO:0007744" key="6">
    <source>
    </source>
</evidence>
<protein>
    <recommendedName>
        <fullName>Protein strawberry notch homolog 1</fullName>
    </recommendedName>
</protein>
<comment type="function">
    <text evidence="2">Plays a crucial role in the regulation of neural stem cells (NSCs) proliferation. Enhances the phosphorylation of GSK3B through the PI3K-Akt signaling pathway, thereby upregulating the Wnt/beta-catenin signaling pathway and promoting the proliferation of NSCs. Improves ischemic stroke recovery while inhibiting neuroinflammation through small extracellular vesicles (sEVs)-mediated mechanism. Enhances the secretion of sEVs from NSCs, which in turn inhibit both the MAPK and NF-kappaB pathways in microglia. This inhibition suppresses the pro-inflammatory M1 polarization of microglia, promoting a shift towards the M2 anti-inflammatory phenotype, which is beneficial for reducing neuroinflammation.</text>
</comment>
<comment type="subcellular location">
    <subcellularLocation>
        <location evidence="2">Nucleus</location>
    </subcellularLocation>
</comment>
<comment type="similarity">
    <text evidence="5">Belongs to the SBNO family.</text>
</comment>
<accession>Q5BJL5</accession>
<proteinExistence type="evidence at protein level"/>
<sequence length="1269" mass="140741">MVEPGQDLLLAALSESGISPNDLFDVDGGDAGLATPTPPSVQQQQPPSTTTFVLNQINQLPTLGSTIVMTKTPPATTNRQTITLTKFIQTTANTRPSVSAPAVRNAIPPAPAKDQVQLKDLLKNNSLNELMKLKPPANIAQPVATAAADVSNGAVKKESSNKEVARVWINDMKMRSFSPTMKVPVVREEDEPEEEDEEEMGHAETYAEYMPIKLKIGLRHPDAVVETSSLSSVTPPDVWYKTSISEETIDNGWLSALQLEAVTYAAQQHETFLPNGDRAGFLIGDGAGVGKGRTIAGIIYENYLLSRKRALWFSVSNDLKYDAERDLRDIGAKNILVHSLNKFKYGKISSKHNGSVKKGVIFATYSSLIGESQSGGKYKTRLKQLLHWCGDDFDGVIVFDECHKAKNLCPVGSSKPTKTGLAVLELQNKLPKARVVYASATGASEPRNMAYMNRLGIWGEGTPFREFSDFIQAVERRGVGAMEIVAMDMKLRGMYIARQLSFTGVTFKIEEVLLSQSYVKMYNKAVKLWVIARERFQQAADLIDAEQRMKKSMWGQFWSAHQRFFKYLCIASKVKRVVQLAREEIKNGKCVVIGLQSTGEARTLEALEEGGGELNDFVSTAKGVLQSLIEKHFPAPDRKKLYSLLGIDLTAPSNNSSPRDSAKKARKIGGLTGSSSDDSGSESDVSDNEESDYESSKNMSSGDDDDFNPFRDDNSSLITSQDAVERAQQMKKDLLDKLEKLAEDLPPNTLDELIDELGGPENVAEMTGRKGRVVSNDDGSISYESRSELDVPVEILNITEKQRFMDGDKNIAIISEAASSGISLQADRRAKNQRRRVHMTLELPWSADRAIQQFGRTHRSNQVTAPEYVFLISELAGEQRFASIVAKRLESLGALTHGDRRATESRDLSRFNFDNKYGRNALEIVMKSIVNLDSPMVSPPPDYPGEFFKDVRQGLIGVGLINVEDRSGILTLDKDYNNIGKFLNRILGMEVHQQNALFQYFADTLTAVVQNAKKNGRYDMGILDLGSGDEKVRKSDVKKFLTPGYSTSGHVELYTISVERGMSWDEATKIWAELTGPDDGFYLSLQIRNNKKTAILVKEVNPKKKLFLIYRPNTGKQLKLEIYADLKKKYKKVVSDDALVHWLDQYNSSADTCTHAYWRGNCKKASLGLVCEIGLRCRTYYVLCGSVLSVWTKVEGVLASVSGTNVKMQIVRLRTEDGQRIVGLIIPANCVSPLVNLLSTSDQSQQLAVQQKQLWQQHHPQSITNLSNV</sequence>
<dbReference type="EMBL" id="AABR03082113">
    <property type="status" value="NOT_ANNOTATED_CDS"/>
    <property type="molecule type" value="Genomic_DNA"/>
</dbReference>
<dbReference type="EMBL" id="BC091433">
    <property type="protein sequence ID" value="AAH91433.1"/>
    <property type="molecule type" value="mRNA"/>
</dbReference>
<dbReference type="FunCoup" id="Q5BJL5">
    <property type="interactions" value="3735"/>
</dbReference>
<dbReference type="STRING" id="10116.ENSRNOP00000073430"/>
<dbReference type="GlyGen" id="Q5BJL5">
    <property type="glycosylation" value="1 site"/>
</dbReference>
<dbReference type="iPTMnet" id="Q5BJL5"/>
<dbReference type="PhosphoSitePlus" id="Q5BJL5"/>
<dbReference type="PaxDb" id="10116-ENSRNOP00000054711"/>
<dbReference type="UCSC" id="RGD:1310005">
    <property type="organism name" value="rat"/>
</dbReference>
<dbReference type="AGR" id="RGD:1310005"/>
<dbReference type="RGD" id="1310005">
    <property type="gene designation" value="Sbno1"/>
</dbReference>
<dbReference type="eggNOG" id="KOG1513">
    <property type="taxonomic scope" value="Eukaryota"/>
</dbReference>
<dbReference type="InParanoid" id="Q5BJL5"/>
<dbReference type="PRO" id="PR:Q5BJL5"/>
<dbReference type="Proteomes" id="UP000002494">
    <property type="component" value="Unplaced"/>
</dbReference>
<dbReference type="GO" id="GO:0005634">
    <property type="term" value="C:nucleus"/>
    <property type="evidence" value="ECO:0000250"/>
    <property type="project" value="UniProtKB"/>
</dbReference>
<dbReference type="GO" id="GO:0031490">
    <property type="term" value="F:chromatin DNA binding"/>
    <property type="evidence" value="ECO:0000318"/>
    <property type="project" value="GO_Central"/>
</dbReference>
<dbReference type="GO" id="GO:0042393">
    <property type="term" value="F:histone binding"/>
    <property type="evidence" value="ECO:0000318"/>
    <property type="project" value="GO_Central"/>
</dbReference>
<dbReference type="GO" id="GO:0043124">
    <property type="term" value="P:negative regulation of canonical NF-kappaB signal transduction"/>
    <property type="evidence" value="ECO:0000250"/>
    <property type="project" value="UniProtKB"/>
</dbReference>
<dbReference type="GO" id="GO:0043409">
    <property type="term" value="P:negative regulation of MAPK cascade"/>
    <property type="evidence" value="ECO:0000250"/>
    <property type="project" value="UniProtKB"/>
</dbReference>
<dbReference type="GO" id="GO:0150079">
    <property type="term" value="P:negative regulation of neuroinflammatory response"/>
    <property type="evidence" value="ECO:0000250"/>
    <property type="project" value="UniProtKB"/>
</dbReference>
<dbReference type="GO" id="GO:0090263">
    <property type="term" value="P:positive regulation of canonical Wnt signaling pathway"/>
    <property type="evidence" value="ECO:0000250"/>
    <property type="project" value="UniProtKB"/>
</dbReference>
<dbReference type="GO" id="GO:2000179">
    <property type="term" value="P:positive regulation of neural precursor cell proliferation"/>
    <property type="evidence" value="ECO:0000250"/>
    <property type="project" value="UniProtKB"/>
</dbReference>
<dbReference type="GO" id="GO:0006355">
    <property type="term" value="P:regulation of DNA-templated transcription"/>
    <property type="evidence" value="ECO:0000318"/>
    <property type="project" value="GO_Central"/>
</dbReference>
<dbReference type="FunFam" id="3.40.50.300:FF:000282">
    <property type="entry name" value="Strawberry notch homolog 1 (Drosophila)"/>
    <property type="match status" value="1"/>
</dbReference>
<dbReference type="Gene3D" id="3.40.50.300">
    <property type="entry name" value="P-loop containing nucleotide triphosphate hydrolases"/>
    <property type="match status" value="2"/>
</dbReference>
<dbReference type="InterPro" id="IPR027417">
    <property type="entry name" value="P-loop_NTPase"/>
</dbReference>
<dbReference type="InterPro" id="IPR026937">
    <property type="entry name" value="SBNO_Helicase_C_dom"/>
</dbReference>
<dbReference type="InterPro" id="IPR026741">
    <property type="entry name" value="SNO"/>
</dbReference>
<dbReference type="InterPro" id="IPR039187">
    <property type="entry name" value="SNO_AAA"/>
</dbReference>
<dbReference type="PANTHER" id="PTHR12706:SF8">
    <property type="entry name" value="PROTEIN STRAWBERRY NOTCH HOMOLOG 1"/>
    <property type="match status" value="1"/>
</dbReference>
<dbReference type="PANTHER" id="PTHR12706">
    <property type="entry name" value="STRAWBERRY NOTCH-RELATED"/>
    <property type="match status" value="1"/>
</dbReference>
<dbReference type="Pfam" id="PF13872">
    <property type="entry name" value="AAA_34"/>
    <property type="match status" value="1"/>
</dbReference>
<dbReference type="Pfam" id="PF13871">
    <property type="entry name" value="Helicase_C_4"/>
    <property type="match status" value="1"/>
</dbReference>
<dbReference type="Pfam" id="PF25373">
    <property type="entry name" value="SBNO"/>
    <property type="match status" value="1"/>
</dbReference>
<dbReference type="SUPFAM" id="SSF52540">
    <property type="entry name" value="P-loop containing nucleoside triphosphate hydrolases"/>
    <property type="match status" value="2"/>
</dbReference>
<feature type="chain" id="PRO_0000314557" description="Protein strawberry notch homolog 1">
    <location>
        <begin position="1"/>
        <end position="1269"/>
    </location>
</feature>
<feature type="region of interest" description="Disordered" evidence="4">
    <location>
        <begin position="21"/>
        <end position="47"/>
    </location>
</feature>
<feature type="region of interest" description="Disordered" evidence="4">
    <location>
        <begin position="652"/>
        <end position="725"/>
    </location>
</feature>
<feature type="coiled-coil region" evidence="3">
    <location>
        <begin position="719"/>
        <end position="746"/>
    </location>
</feature>
<feature type="compositionally biased region" description="Acidic residues" evidence="4">
    <location>
        <begin position="679"/>
        <end position="693"/>
    </location>
</feature>
<feature type="modified residue" description="N6-acetyllysine" evidence="1">
    <location>
        <position position="113"/>
    </location>
</feature>
<feature type="modified residue" description="Phosphoserine" evidence="1">
    <location>
        <position position="126"/>
    </location>
</feature>
<feature type="modified residue" description="Phosphoserine" evidence="6">
    <location>
        <position position="178"/>
    </location>
</feature>
<feature type="modified residue" description="N6-acetyllysine" evidence="1">
    <location>
        <position position="377"/>
    </location>
</feature>
<feature type="modified residue" description="Phosphoserine" evidence="2">
    <location>
        <position position="656"/>
    </location>
</feature>
<feature type="modified residue" description="Phosphoserine" evidence="2">
    <location>
        <position position="657"/>
    </location>
</feature>
<feature type="modified residue" description="Phosphoserine" evidence="1">
    <location>
        <position position="661"/>
    </location>
</feature>
<feature type="modified residue" description="Phosphoserine" evidence="6">
    <location>
        <position position="700"/>
    </location>
</feature>
<feature type="modified residue" description="Phosphoserine" evidence="6">
    <location>
        <position position="701"/>
    </location>
</feature>
<feature type="modified residue" description="N6-acetyllysine" evidence="1">
    <location>
        <position position="1098"/>
    </location>
</feature>
<feature type="modified residue" description="Phosphoserine" evidence="1">
    <location>
        <position position="1262"/>
    </location>
</feature>
<reference key="1">
    <citation type="journal article" date="2004" name="Nature">
        <title>Genome sequence of the Brown Norway rat yields insights into mammalian evolution.</title>
        <authorList>
            <person name="Gibbs R.A."/>
            <person name="Weinstock G.M."/>
            <person name="Metzker M.L."/>
            <person name="Muzny D.M."/>
            <person name="Sodergren E.J."/>
            <person name="Scherer S."/>
            <person name="Scott G."/>
            <person name="Steffen D."/>
            <person name="Worley K.C."/>
            <person name="Burch P.E."/>
            <person name="Okwuonu G."/>
            <person name="Hines S."/>
            <person name="Lewis L."/>
            <person name="Deramo C."/>
            <person name="Delgado O."/>
            <person name="Dugan-Rocha S."/>
            <person name="Miner G."/>
            <person name="Morgan M."/>
            <person name="Hawes A."/>
            <person name="Gill R."/>
            <person name="Holt R.A."/>
            <person name="Adams M.D."/>
            <person name="Amanatides P.G."/>
            <person name="Baden-Tillson H."/>
            <person name="Barnstead M."/>
            <person name="Chin S."/>
            <person name="Evans C.A."/>
            <person name="Ferriera S."/>
            <person name="Fosler C."/>
            <person name="Glodek A."/>
            <person name="Gu Z."/>
            <person name="Jennings D."/>
            <person name="Kraft C.L."/>
            <person name="Nguyen T."/>
            <person name="Pfannkoch C.M."/>
            <person name="Sitter C."/>
            <person name="Sutton G.G."/>
            <person name="Venter J.C."/>
            <person name="Woodage T."/>
            <person name="Smith D."/>
            <person name="Lee H.-M."/>
            <person name="Gustafson E."/>
            <person name="Cahill P."/>
            <person name="Kana A."/>
            <person name="Doucette-Stamm L."/>
            <person name="Weinstock K."/>
            <person name="Fechtel K."/>
            <person name="Weiss R.B."/>
            <person name="Dunn D.M."/>
            <person name="Green E.D."/>
            <person name="Blakesley R.W."/>
            <person name="Bouffard G.G."/>
            <person name="De Jong P.J."/>
            <person name="Osoegawa K."/>
            <person name="Zhu B."/>
            <person name="Marra M."/>
            <person name="Schein J."/>
            <person name="Bosdet I."/>
            <person name="Fjell C."/>
            <person name="Jones S."/>
            <person name="Krzywinski M."/>
            <person name="Mathewson C."/>
            <person name="Siddiqui A."/>
            <person name="Wye N."/>
            <person name="McPherson J."/>
            <person name="Zhao S."/>
            <person name="Fraser C.M."/>
            <person name="Shetty J."/>
            <person name="Shatsman S."/>
            <person name="Geer K."/>
            <person name="Chen Y."/>
            <person name="Abramzon S."/>
            <person name="Nierman W.C."/>
            <person name="Havlak P.H."/>
            <person name="Chen R."/>
            <person name="Durbin K.J."/>
            <person name="Egan A."/>
            <person name="Ren Y."/>
            <person name="Song X.-Z."/>
            <person name="Li B."/>
            <person name="Liu Y."/>
            <person name="Qin X."/>
            <person name="Cawley S."/>
            <person name="Cooney A.J."/>
            <person name="D'Souza L.M."/>
            <person name="Martin K."/>
            <person name="Wu J.Q."/>
            <person name="Gonzalez-Garay M.L."/>
            <person name="Jackson A.R."/>
            <person name="Kalafus K.J."/>
            <person name="McLeod M.P."/>
            <person name="Milosavljevic A."/>
            <person name="Virk D."/>
            <person name="Volkov A."/>
            <person name="Wheeler D.A."/>
            <person name="Zhang Z."/>
            <person name="Bailey J.A."/>
            <person name="Eichler E.E."/>
            <person name="Tuzun E."/>
            <person name="Birney E."/>
            <person name="Mongin E."/>
            <person name="Ureta-Vidal A."/>
            <person name="Woodwark C."/>
            <person name="Zdobnov E."/>
            <person name="Bork P."/>
            <person name="Suyama M."/>
            <person name="Torrents D."/>
            <person name="Alexandersson M."/>
            <person name="Trask B.J."/>
            <person name="Young J.M."/>
            <person name="Huang H."/>
            <person name="Wang H."/>
            <person name="Xing H."/>
            <person name="Daniels S."/>
            <person name="Gietzen D."/>
            <person name="Schmidt J."/>
            <person name="Stevens K."/>
            <person name="Vitt U."/>
            <person name="Wingrove J."/>
            <person name="Camara F."/>
            <person name="Mar Alba M."/>
            <person name="Abril J.F."/>
            <person name="Guigo R."/>
            <person name="Smit A."/>
            <person name="Dubchak I."/>
            <person name="Rubin E.M."/>
            <person name="Couronne O."/>
            <person name="Poliakov A."/>
            <person name="Huebner N."/>
            <person name="Ganten D."/>
            <person name="Goesele C."/>
            <person name="Hummel O."/>
            <person name="Kreitler T."/>
            <person name="Lee Y.-A."/>
            <person name="Monti J."/>
            <person name="Schulz H."/>
            <person name="Zimdahl H."/>
            <person name="Himmelbauer H."/>
            <person name="Lehrach H."/>
            <person name="Jacob H.J."/>
            <person name="Bromberg S."/>
            <person name="Gullings-Handley J."/>
            <person name="Jensen-Seaman M.I."/>
            <person name="Kwitek A.E."/>
            <person name="Lazar J."/>
            <person name="Pasko D."/>
            <person name="Tonellato P.J."/>
            <person name="Twigger S."/>
            <person name="Ponting C.P."/>
            <person name="Duarte J.M."/>
            <person name="Rice S."/>
            <person name="Goodstadt L."/>
            <person name="Beatson S.A."/>
            <person name="Emes R.D."/>
            <person name="Winter E.E."/>
            <person name="Webber C."/>
            <person name="Brandt P."/>
            <person name="Nyakatura G."/>
            <person name="Adetobi M."/>
            <person name="Chiaromonte F."/>
            <person name="Elnitski L."/>
            <person name="Eswara P."/>
            <person name="Hardison R.C."/>
            <person name="Hou M."/>
            <person name="Kolbe D."/>
            <person name="Makova K."/>
            <person name="Miller W."/>
            <person name="Nekrutenko A."/>
            <person name="Riemer C."/>
            <person name="Schwartz S."/>
            <person name="Taylor J."/>
            <person name="Yang S."/>
            <person name="Zhang Y."/>
            <person name="Lindpaintner K."/>
            <person name="Andrews T.D."/>
            <person name="Caccamo M."/>
            <person name="Clamp M."/>
            <person name="Clarke L."/>
            <person name="Curwen V."/>
            <person name="Durbin R.M."/>
            <person name="Eyras E."/>
            <person name="Searle S.M."/>
            <person name="Cooper G.M."/>
            <person name="Batzoglou S."/>
            <person name="Brudno M."/>
            <person name="Sidow A."/>
            <person name="Stone E.A."/>
            <person name="Payseur B.A."/>
            <person name="Bourque G."/>
            <person name="Lopez-Otin C."/>
            <person name="Puente X.S."/>
            <person name="Chakrabarti K."/>
            <person name="Chatterji S."/>
            <person name="Dewey C."/>
            <person name="Pachter L."/>
            <person name="Bray N."/>
            <person name="Yap V.B."/>
            <person name="Caspi A."/>
            <person name="Tesler G."/>
            <person name="Pevzner P.A."/>
            <person name="Haussler D."/>
            <person name="Roskin K.M."/>
            <person name="Baertsch R."/>
            <person name="Clawson H."/>
            <person name="Furey T.S."/>
            <person name="Hinrichs A.S."/>
            <person name="Karolchik D."/>
            <person name="Kent W.J."/>
            <person name="Rosenbloom K.R."/>
            <person name="Trumbower H."/>
            <person name="Weirauch M."/>
            <person name="Cooper D.N."/>
            <person name="Stenson P.D."/>
            <person name="Ma B."/>
            <person name="Brent M."/>
            <person name="Arumugam M."/>
            <person name="Shteynberg D."/>
            <person name="Copley R.R."/>
            <person name="Taylor M.S."/>
            <person name="Riethman H."/>
            <person name="Mudunuri U."/>
            <person name="Peterson J."/>
            <person name="Guyer M."/>
            <person name="Felsenfeld A."/>
            <person name="Old S."/>
            <person name="Mockrin S."/>
            <person name="Collins F.S."/>
        </authorList>
    </citation>
    <scope>NUCLEOTIDE SEQUENCE [LARGE SCALE GENOMIC DNA]</scope>
    <source>
        <strain>Brown Norway</strain>
    </source>
</reference>
<reference key="2">
    <citation type="journal article" date="2004" name="Genome Res.">
        <title>The status, quality, and expansion of the NIH full-length cDNA project: the Mammalian Gene Collection (MGC).</title>
        <authorList>
            <consortium name="The MGC Project Team"/>
        </authorList>
    </citation>
    <scope>NUCLEOTIDE SEQUENCE [LARGE SCALE MRNA] OF 1089-1269</scope>
    <source>
        <tissue>Spleen</tissue>
    </source>
</reference>
<reference key="3">
    <citation type="journal article" date="2012" name="Nat. Commun.">
        <title>Quantitative maps of protein phosphorylation sites across 14 different rat organs and tissues.</title>
        <authorList>
            <person name="Lundby A."/>
            <person name="Secher A."/>
            <person name="Lage K."/>
            <person name="Nordsborg N.B."/>
            <person name="Dmytriyev A."/>
            <person name="Lundby C."/>
            <person name="Olsen J.V."/>
        </authorList>
    </citation>
    <scope>PHOSPHORYLATION [LARGE SCALE ANALYSIS] AT SER-178; SER-700 AND SER-701</scope>
    <scope>IDENTIFICATION BY MASS SPECTROMETRY [LARGE SCALE ANALYSIS]</scope>
</reference>